<keyword id="KW-0012">Acyltransferase</keyword>
<keyword id="KW-0903">Direct protein sequencing</keyword>
<keyword id="KW-1015">Disulfide bond</keyword>
<keyword id="KW-0325">Glycoprotein</keyword>
<keyword id="KW-0479">Metal-binding</keyword>
<keyword id="KW-1185">Reference proteome</keyword>
<keyword id="KW-0964">Secreted</keyword>
<keyword id="KW-0732">Signal</keyword>
<keyword id="KW-0808">Transferase</keyword>
<keyword id="KW-0862">Zinc</keyword>
<proteinExistence type="evidence at protein level"/>
<feature type="signal peptide" evidence="4">
    <location>
        <begin position="1"/>
        <end position="28"/>
    </location>
</feature>
<feature type="chain" id="PRO_0000022194" description="Glutaminyl-peptide cyclotransferase">
    <location>
        <begin position="29"/>
        <end position="361"/>
    </location>
</feature>
<feature type="active site" description="Proton acceptor" evidence="3">
    <location>
        <position position="201"/>
    </location>
</feature>
<feature type="active site" description="Proton acceptor" evidence="3">
    <location>
        <position position="248"/>
    </location>
</feature>
<feature type="binding site" evidence="3">
    <location>
        <position position="159"/>
    </location>
    <ligand>
        <name>Zn(2+)</name>
        <dbReference type="ChEBI" id="CHEBI:29105"/>
    </ligand>
</feature>
<feature type="binding site" evidence="3">
    <location>
        <position position="202"/>
    </location>
    <ligand>
        <name>Zn(2+)</name>
        <dbReference type="ChEBI" id="CHEBI:29105"/>
    </ligand>
</feature>
<feature type="binding site" evidence="3">
    <location>
        <position position="330"/>
    </location>
    <ligand>
        <name>Zn(2+)</name>
        <dbReference type="ChEBI" id="CHEBI:29105"/>
    </ligand>
</feature>
<feature type="glycosylation site" description="N-linked (GlcNAc...) asparagine" evidence="4">
    <location>
        <position position="49"/>
    </location>
</feature>
<feature type="glycosylation site" description="N-linked (GlcNAc...) asparagine" evidence="4">
    <location>
        <position position="183"/>
    </location>
</feature>
<feature type="disulfide bond" evidence="3">
    <location>
        <begin position="139"/>
        <end position="164"/>
    </location>
</feature>
<organism>
    <name type="scientific">Bos taurus</name>
    <name type="common">Bovine</name>
    <dbReference type="NCBI Taxonomy" id="9913"/>
    <lineage>
        <taxon>Eukaryota</taxon>
        <taxon>Metazoa</taxon>
        <taxon>Chordata</taxon>
        <taxon>Craniata</taxon>
        <taxon>Vertebrata</taxon>
        <taxon>Euteleostomi</taxon>
        <taxon>Mammalia</taxon>
        <taxon>Eutheria</taxon>
        <taxon>Laurasiatheria</taxon>
        <taxon>Artiodactyla</taxon>
        <taxon>Ruminantia</taxon>
        <taxon>Pecora</taxon>
        <taxon>Bovidae</taxon>
        <taxon>Bovinae</taxon>
        <taxon>Bos</taxon>
    </lineage>
</organism>
<sequence length="361" mass="41224">MAGCRDPRVVDTLHLLLLVAVLPLAVSGVRRGAVDWTQEKNYHQPALLNVSSLRQVAEGTSISEMWQNDLRPLLIERYPGSPGSFAARQHIMQRIQRLQADWVLEVDTFLSQTPYGYRSFSNIISTLNPTAKRHLVLACHYDSKYFPHWDDRVFVGATDSAVPCAMMLELARALDKQLFSLKNISDSRPDLSLQLIFFDGEEAFHLWSPQDSLYGSRHLASKMASTPHPPGARDTNQLHGMDLLVLLDLIGAPFPTFPNFFPNTARWFGRLEAIEHGLRELGLLKDHSSERWYFRNYGYGGVIQDDHIPFLRRGVPVLHLISSPFPEVWHTMDDNEENLDRTTIDNLNKILQVFVLEYLHL</sequence>
<protein>
    <recommendedName>
        <fullName>Glutaminyl-peptide cyclotransferase</fullName>
        <ecNumber>2.3.2.5</ecNumber>
    </recommendedName>
    <alternativeName>
        <fullName>Glutaminyl cyclase</fullName>
        <shortName>QC</shortName>
    </alternativeName>
    <alternativeName>
        <fullName>Glutaminyl-tRNA cyclotransferase</fullName>
    </alternativeName>
</protein>
<reference key="1">
    <citation type="journal article" date="1991" name="Proc. Natl. Acad. Sci. U.S.A.">
        <title>Primary structure and functional expression of a glutaminyl cyclase.</title>
        <authorList>
            <person name="Pohl T."/>
            <person name="Zimmer M."/>
            <person name="Mugele K."/>
            <person name="Spiess J."/>
        </authorList>
    </citation>
    <scope>NUCLEOTIDE SEQUENCE [MRNA]</scope>
    <scope>PARTIAL PROTEIN SEQUENCE</scope>
</reference>
<accession>Q28120</accession>
<comment type="function">
    <text evidence="1">Responsible for the biosynthesis of pyroglutamyl peptides. Has a bias against acidic and tryptophan residues adjacent to the N-terminal glutaminyl residue and a lack of importance of chain length after the second residue. Also catalyzes N-terminal pyroglutamate formation (By similarity).</text>
</comment>
<comment type="catalytic activity">
    <reaction>
        <text>N-terminal L-glutaminyl-[peptide] = N-terminal 5-oxo-L-prolyl-[peptide] + NH4(+)</text>
        <dbReference type="Rhea" id="RHEA:23652"/>
        <dbReference type="Rhea" id="RHEA-COMP:11736"/>
        <dbReference type="Rhea" id="RHEA-COMP:11846"/>
        <dbReference type="ChEBI" id="CHEBI:28938"/>
        <dbReference type="ChEBI" id="CHEBI:64722"/>
        <dbReference type="ChEBI" id="CHEBI:87215"/>
        <dbReference type="EC" id="2.3.2.5"/>
    </reaction>
</comment>
<comment type="subcellular location">
    <subcellularLocation>
        <location evidence="1">Secreted</location>
    </subcellularLocation>
</comment>
<comment type="tissue specificity">
    <text>Expressed mainly in brain tissue.</text>
</comment>
<comment type="similarity">
    <text evidence="5">Belongs to the glutaminyl-peptide cyclotransferase family.</text>
</comment>
<comment type="caution">
    <text evidence="2 3">It is unclear whether this protein requires a metal cofactor for catalysis. It was originally proposed to be a Zn(2+)-dependent metalloenzyme based on structural similarities to bacterial aminopeptidases and the observation that it can bind Zn(2+) ions, typically in a 1:1 stoichiometry (By similarity). However, a recent study suggests a Zn(2+)-independent catalytic mechanism (By similarity).</text>
</comment>
<dbReference type="EC" id="2.3.2.5"/>
<dbReference type="EMBL" id="M80626">
    <property type="protein sequence ID" value="AAA30549.1"/>
    <property type="molecule type" value="mRNA"/>
</dbReference>
<dbReference type="PIR" id="A41535">
    <property type="entry name" value="A41535"/>
</dbReference>
<dbReference type="RefSeq" id="NP_803472.1">
    <property type="nucleotide sequence ID" value="NM_177506.2"/>
</dbReference>
<dbReference type="SMR" id="Q28120"/>
<dbReference type="FunCoup" id="Q28120">
    <property type="interactions" value="56"/>
</dbReference>
<dbReference type="STRING" id="9913.ENSBTAP00000018493"/>
<dbReference type="MEROPS" id="M28.974"/>
<dbReference type="GlyCosmos" id="Q28120">
    <property type="glycosylation" value="2 sites, No reported glycans"/>
</dbReference>
<dbReference type="GlyGen" id="Q28120">
    <property type="glycosylation" value="2 sites"/>
</dbReference>
<dbReference type="PaxDb" id="9913-ENSBTAP00000018493"/>
<dbReference type="GeneID" id="281437"/>
<dbReference type="KEGG" id="bta:281437"/>
<dbReference type="CTD" id="25797"/>
<dbReference type="eggNOG" id="KOG3946">
    <property type="taxonomic scope" value="Eukaryota"/>
</dbReference>
<dbReference type="InParanoid" id="Q28120"/>
<dbReference type="OrthoDB" id="3907302at2759"/>
<dbReference type="Proteomes" id="UP000009136">
    <property type="component" value="Unplaced"/>
</dbReference>
<dbReference type="GO" id="GO:0005576">
    <property type="term" value="C:extracellular region"/>
    <property type="evidence" value="ECO:0007669"/>
    <property type="project" value="UniProtKB-SubCell"/>
</dbReference>
<dbReference type="GO" id="GO:0016603">
    <property type="term" value="F:glutaminyl-peptide cyclotransferase activity"/>
    <property type="evidence" value="ECO:0000250"/>
    <property type="project" value="UniProtKB"/>
</dbReference>
<dbReference type="GO" id="GO:0008270">
    <property type="term" value="F:zinc ion binding"/>
    <property type="evidence" value="ECO:0000250"/>
    <property type="project" value="UniProtKB"/>
</dbReference>
<dbReference type="GO" id="GO:0017186">
    <property type="term" value="P:peptidyl-pyroglutamic acid biosynthetic process, using glutaminyl-peptide cyclotransferase"/>
    <property type="evidence" value="ECO:0000250"/>
    <property type="project" value="UniProtKB"/>
</dbReference>
<dbReference type="CDD" id="cd03880">
    <property type="entry name" value="M28_QC_like"/>
    <property type="match status" value="1"/>
</dbReference>
<dbReference type="FunFam" id="3.40.630.10:FF:000029">
    <property type="entry name" value="Glutaminyl-peptide cyclotransferase"/>
    <property type="match status" value="1"/>
</dbReference>
<dbReference type="Gene3D" id="3.40.630.10">
    <property type="entry name" value="Zn peptidases"/>
    <property type="match status" value="1"/>
</dbReference>
<dbReference type="InterPro" id="IPR037457">
    <property type="entry name" value="M28_QC"/>
</dbReference>
<dbReference type="InterPro" id="IPR007484">
    <property type="entry name" value="Peptidase_M28"/>
</dbReference>
<dbReference type="InterPro" id="IPR040234">
    <property type="entry name" value="QC/QCL"/>
</dbReference>
<dbReference type="PANTHER" id="PTHR12283">
    <property type="entry name" value="GLUTAMINYL-PEPTIDE CYCLOTRANSFERASE"/>
    <property type="match status" value="1"/>
</dbReference>
<dbReference type="PANTHER" id="PTHR12283:SF5">
    <property type="entry name" value="GLUTAMINYL-PEPTIDE CYCLOTRANSFERASE"/>
    <property type="match status" value="1"/>
</dbReference>
<dbReference type="Pfam" id="PF04389">
    <property type="entry name" value="Peptidase_M28"/>
    <property type="match status" value="1"/>
</dbReference>
<dbReference type="SUPFAM" id="SSF53187">
    <property type="entry name" value="Zn-dependent exopeptidases"/>
    <property type="match status" value="1"/>
</dbReference>
<evidence type="ECO:0000250" key="1"/>
<evidence type="ECO:0000250" key="2">
    <source>
        <dbReference type="UniProtKB" id="B7QK46"/>
    </source>
</evidence>
<evidence type="ECO:0000250" key="3">
    <source>
        <dbReference type="UniProtKB" id="Q16769"/>
    </source>
</evidence>
<evidence type="ECO:0000255" key="4"/>
<evidence type="ECO:0000305" key="5"/>
<name>QPCT_BOVIN</name>
<gene>
    <name type="primary">QPCT</name>
</gene>